<gene>
    <name evidence="1" type="primary">wzyE</name>
    <name type="ordered locus">SSON_3966</name>
</gene>
<sequence>MSLLQFSGLFVVWLLCTLFIATLTWFEFRRVRFNFNVFFSLLFLLTFFFGFPLTSVLVFRFDVGVAPPEILLQALLSAGCFYAVYYVTYKTRLRKRVADVPRRPLFTMNRVETNLTWVILMGIALVSVGIFFMHNGFLLFRLNSYSQIFSSEVSGVALKRFFYFFIPAMLVVYFLRQDSKAWLFFLVSTVAFGLLTYMIVGGTRANIIIAFAIFLFIGIIRGWISLWMLAAAGVLGIVGMFWLALKRYGMNVSGDEAFYTFLYLTRDTFSPWENLALLLQNYDNIDFQGLAPIVRDFYVFIPSWLWPGRPSMVLNSANYFTWEVLNNHSGLAISPTLIGSLVVMGGALFIPLGAIVVGLIIKWFDWLYELGNREPNRYKAAILHSFCFGAIFNMIVLAREGLDSFVSRVVFFIVVFGACLMIAKLLYWLFESAGLIHKRTKSSLRTQVEG</sequence>
<keyword id="KW-0997">Cell inner membrane</keyword>
<keyword id="KW-1003">Cell membrane</keyword>
<keyword id="KW-0472">Membrane</keyword>
<keyword id="KW-1185">Reference proteome</keyword>
<keyword id="KW-0812">Transmembrane</keyword>
<keyword id="KW-1133">Transmembrane helix</keyword>
<accession>Q3YVG9</accession>
<organism>
    <name type="scientific">Shigella sonnei (strain Ss046)</name>
    <dbReference type="NCBI Taxonomy" id="300269"/>
    <lineage>
        <taxon>Bacteria</taxon>
        <taxon>Pseudomonadati</taxon>
        <taxon>Pseudomonadota</taxon>
        <taxon>Gammaproteobacteria</taxon>
        <taxon>Enterobacterales</taxon>
        <taxon>Enterobacteriaceae</taxon>
        <taxon>Shigella</taxon>
    </lineage>
</organism>
<comment type="function">
    <text evidence="1">Probably involved in the polymerization of enterobacterial common antigen (ECA) trisaccharide repeat units.</text>
</comment>
<comment type="pathway">
    <text evidence="1">Bacterial outer membrane biogenesis; enterobacterial common antigen biosynthesis.</text>
</comment>
<comment type="subunit">
    <text evidence="1">Probably part of a complex composed of WzxE, WzyE and WzzE.</text>
</comment>
<comment type="subcellular location">
    <subcellularLocation>
        <location evidence="1">Cell inner membrane</location>
        <topology evidence="1">Multi-pass membrane protein</topology>
    </subcellularLocation>
</comment>
<comment type="similarity">
    <text evidence="1">Belongs to the WzyE family.</text>
</comment>
<name>WZYE_SHISS</name>
<feature type="chain" id="PRO_1000062766" description="Probable ECA polymerase">
    <location>
        <begin position="1"/>
        <end position="450"/>
    </location>
</feature>
<feature type="transmembrane region" description="Helical" evidence="1">
    <location>
        <begin position="6"/>
        <end position="26"/>
    </location>
</feature>
<feature type="transmembrane region" description="Helical" evidence="1">
    <location>
        <begin position="37"/>
        <end position="57"/>
    </location>
</feature>
<feature type="transmembrane region" description="Helical" evidence="1">
    <location>
        <begin position="63"/>
        <end position="83"/>
    </location>
</feature>
<feature type="transmembrane region" description="Helical" evidence="1">
    <location>
        <begin position="118"/>
        <end position="138"/>
    </location>
</feature>
<feature type="transmembrane region" description="Helical" evidence="1">
    <location>
        <begin position="155"/>
        <end position="175"/>
    </location>
</feature>
<feature type="transmembrane region" description="Helical" evidence="1">
    <location>
        <begin position="181"/>
        <end position="201"/>
    </location>
</feature>
<feature type="transmembrane region" description="Helical" evidence="1">
    <location>
        <begin position="207"/>
        <end position="227"/>
    </location>
</feature>
<feature type="transmembrane region" description="Helical" evidence="1">
    <location>
        <begin position="228"/>
        <end position="248"/>
    </location>
</feature>
<feature type="transmembrane region" description="Helical" evidence="1">
    <location>
        <begin position="341"/>
        <end position="361"/>
    </location>
</feature>
<feature type="transmembrane region" description="Helical" evidence="1">
    <location>
        <begin position="378"/>
        <end position="398"/>
    </location>
</feature>
<feature type="transmembrane region" description="Helical" evidence="1">
    <location>
        <begin position="410"/>
        <end position="430"/>
    </location>
</feature>
<dbReference type="EMBL" id="CP000038">
    <property type="protein sequence ID" value="AAZ90493.1"/>
    <property type="molecule type" value="Genomic_DNA"/>
</dbReference>
<dbReference type="RefSeq" id="WP_000055129.1">
    <property type="nucleotide sequence ID" value="NC_007384.1"/>
</dbReference>
<dbReference type="KEGG" id="ssn:SSON_3966"/>
<dbReference type="HOGENOM" id="CLU_049711_0_0_6"/>
<dbReference type="UniPathway" id="UPA00566"/>
<dbReference type="Proteomes" id="UP000002529">
    <property type="component" value="Chromosome"/>
</dbReference>
<dbReference type="GO" id="GO:0005886">
    <property type="term" value="C:plasma membrane"/>
    <property type="evidence" value="ECO:0007669"/>
    <property type="project" value="UniProtKB-SubCell"/>
</dbReference>
<dbReference type="GO" id="GO:0009246">
    <property type="term" value="P:enterobacterial common antigen biosynthetic process"/>
    <property type="evidence" value="ECO:0007669"/>
    <property type="project" value="UniProtKB-UniRule"/>
</dbReference>
<dbReference type="HAMAP" id="MF_01003">
    <property type="entry name" value="WzyE"/>
    <property type="match status" value="1"/>
</dbReference>
<dbReference type="InterPro" id="IPR010691">
    <property type="entry name" value="WzyE"/>
</dbReference>
<dbReference type="NCBIfam" id="NF002820">
    <property type="entry name" value="PRK02975.1"/>
    <property type="match status" value="1"/>
</dbReference>
<dbReference type="Pfam" id="PF06899">
    <property type="entry name" value="WzyE"/>
    <property type="match status" value="1"/>
</dbReference>
<evidence type="ECO:0000255" key="1">
    <source>
        <dbReference type="HAMAP-Rule" id="MF_01003"/>
    </source>
</evidence>
<proteinExistence type="inferred from homology"/>
<reference key="1">
    <citation type="journal article" date="2005" name="Nucleic Acids Res.">
        <title>Genome dynamics and diversity of Shigella species, the etiologic agents of bacillary dysentery.</title>
        <authorList>
            <person name="Yang F."/>
            <person name="Yang J."/>
            <person name="Zhang X."/>
            <person name="Chen L."/>
            <person name="Jiang Y."/>
            <person name="Yan Y."/>
            <person name="Tang X."/>
            <person name="Wang J."/>
            <person name="Xiong Z."/>
            <person name="Dong J."/>
            <person name="Xue Y."/>
            <person name="Zhu Y."/>
            <person name="Xu X."/>
            <person name="Sun L."/>
            <person name="Chen S."/>
            <person name="Nie H."/>
            <person name="Peng J."/>
            <person name="Xu J."/>
            <person name="Wang Y."/>
            <person name="Yuan Z."/>
            <person name="Wen Y."/>
            <person name="Yao Z."/>
            <person name="Shen Y."/>
            <person name="Qiang B."/>
            <person name="Hou Y."/>
            <person name="Yu J."/>
            <person name="Jin Q."/>
        </authorList>
    </citation>
    <scope>NUCLEOTIDE SEQUENCE [LARGE SCALE GENOMIC DNA]</scope>
    <source>
        <strain>Ss046</strain>
    </source>
</reference>
<protein>
    <recommendedName>
        <fullName evidence="1">Probable ECA polymerase</fullName>
    </recommendedName>
</protein>